<sequence length="325" mass="36126">MKIFDYEDIQLIPNKCIVESRSECNTSVKFGPRTFKLPVVPANMQTVMNEELAQWFAENDYFYIMHRFNEENRIPFIKKMHHAGLFASISVGVKENEFNFIEKLASSSLIPEYITIDIAHGHSNSVINMIKHIKKHLPNSFVIAGNVGTPEGVRELENAGADATKVGIGPGRVCITKIKTGFGTGGWQLSALNLCNKAARKPIIADGGLRTHGDIAKSIRFGATMVMIGSLFAAHEESPGETVELDGKKYKEYFGSASEYQKGEHKNVEGKKMFVEHKGSLKDTLTEMEQDLQSSISYAGGKDLKSLRTVDYVIVRNSIFNGDRD</sequence>
<name>GUAC_STAES</name>
<protein>
    <recommendedName>
        <fullName evidence="1">GMP reductase</fullName>
        <ecNumber evidence="1">1.7.1.7</ecNumber>
    </recommendedName>
    <alternativeName>
        <fullName evidence="1">Guanosine 5'-monophosphate oxidoreductase</fullName>
        <shortName evidence="1">Guanosine monophosphate reductase</shortName>
    </alternativeName>
</protein>
<reference key="1">
    <citation type="journal article" date="2003" name="Mol. Microbiol.">
        <title>Genome-based analysis of virulence genes in a non-biofilm-forming Staphylococcus epidermidis strain (ATCC 12228).</title>
        <authorList>
            <person name="Zhang Y.-Q."/>
            <person name="Ren S.-X."/>
            <person name="Li H.-L."/>
            <person name="Wang Y.-X."/>
            <person name="Fu G."/>
            <person name="Yang J."/>
            <person name="Qin Z.-Q."/>
            <person name="Miao Y.-G."/>
            <person name="Wang W.-Y."/>
            <person name="Chen R.-S."/>
            <person name="Shen Y."/>
            <person name="Chen Z."/>
            <person name="Yuan Z.-H."/>
            <person name="Zhao G.-P."/>
            <person name="Qu D."/>
            <person name="Danchin A."/>
            <person name="Wen Y.-M."/>
        </authorList>
    </citation>
    <scope>NUCLEOTIDE SEQUENCE [LARGE SCALE GENOMIC DNA]</scope>
    <source>
        <strain>ATCC 12228 / FDA PCI 1200</strain>
    </source>
</reference>
<accession>Q8CPC9</accession>
<comment type="function">
    <text evidence="1">Catalyzes the irreversible NADPH-dependent deamination of GMP to IMP. It functions in the conversion of nucleobase, nucleoside and nucleotide derivatives of G to A nucleotides, and in maintaining the intracellular balance of A and G nucleotides.</text>
</comment>
<comment type="catalytic activity">
    <reaction evidence="1">
        <text>IMP + NH4(+) + NADP(+) = GMP + NADPH + 2 H(+)</text>
        <dbReference type="Rhea" id="RHEA:17185"/>
        <dbReference type="ChEBI" id="CHEBI:15378"/>
        <dbReference type="ChEBI" id="CHEBI:28938"/>
        <dbReference type="ChEBI" id="CHEBI:57783"/>
        <dbReference type="ChEBI" id="CHEBI:58053"/>
        <dbReference type="ChEBI" id="CHEBI:58115"/>
        <dbReference type="ChEBI" id="CHEBI:58349"/>
        <dbReference type="EC" id="1.7.1.7"/>
    </reaction>
</comment>
<comment type="similarity">
    <text evidence="1">Belongs to the IMPDH/GMPR family. GuaC type 2 subfamily.</text>
</comment>
<dbReference type="EC" id="1.7.1.7" evidence="1"/>
<dbReference type="EMBL" id="AE015929">
    <property type="protein sequence ID" value="AAO04616.1"/>
    <property type="molecule type" value="Genomic_DNA"/>
</dbReference>
<dbReference type="RefSeq" id="NP_764574.1">
    <property type="nucleotide sequence ID" value="NC_004461.1"/>
</dbReference>
<dbReference type="RefSeq" id="WP_001832645.1">
    <property type="nucleotide sequence ID" value="NZ_WBME01000057.1"/>
</dbReference>
<dbReference type="SMR" id="Q8CPC9"/>
<dbReference type="GeneID" id="50018853"/>
<dbReference type="KEGG" id="sep:SE_1019"/>
<dbReference type="PATRIC" id="fig|176280.10.peg.994"/>
<dbReference type="eggNOG" id="COG0516">
    <property type="taxonomic scope" value="Bacteria"/>
</dbReference>
<dbReference type="HOGENOM" id="CLU_022552_5_0_9"/>
<dbReference type="OrthoDB" id="9805398at2"/>
<dbReference type="Proteomes" id="UP000001411">
    <property type="component" value="Chromosome"/>
</dbReference>
<dbReference type="GO" id="GO:0005829">
    <property type="term" value="C:cytosol"/>
    <property type="evidence" value="ECO:0007669"/>
    <property type="project" value="TreeGrafter"/>
</dbReference>
<dbReference type="GO" id="GO:1902560">
    <property type="term" value="C:GMP reductase complex"/>
    <property type="evidence" value="ECO:0007669"/>
    <property type="project" value="InterPro"/>
</dbReference>
<dbReference type="GO" id="GO:0003920">
    <property type="term" value="F:GMP reductase activity"/>
    <property type="evidence" value="ECO:0007669"/>
    <property type="project" value="UniProtKB-UniRule"/>
</dbReference>
<dbReference type="GO" id="GO:0006163">
    <property type="term" value="P:purine nucleotide metabolic process"/>
    <property type="evidence" value="ECO:0007669"/>
    <property type="project" value="UniProtKB-UniRule"/>
</dbReference>
<dbReference type="CDD" id="cd00381">
    <property type="entry name" value="IMPDH"/>
    <property type="match status" value="1"/>
</dbReference>
<dbReference type="FunFam" id="3.20.20.70:FF:000079">
    <property type="entry name" value="GMP reductase"/>
    <property type="match status" value="1"/>
</dbReference>
<dbReference type="Gene3D" id="3.20.20.70">
    <property type="entry name" value="Aldolase class I"/>
    <property type="match status" value="1"/>
</dbReference>
<dbReference type="HAMAP" id="MF_01511">
    <property type="entry name" value="GMP_reduct_type2"/>
    <property type="match status" value="1"/>
</dbReference>
<dbReference type="InterPro" id="IPR013785">
    <property type="entry name" value="Aldolase_TIM"/>
</dbReference>
<dbReference type="InterPro" id="IPR050139">
    <property type="entry name" value="GMP_reductase"/>
</dbReference>
<dbReference type="InterPro" id="IPR005994">
    <property type="entry name" value="GuaC_type_2"/>
</dbReference>
<dbReference type="InterPro" id="IPR015875">
    <property type="entry name" value="IMP_DH/GMP_Rdtase_CS"/>
</dbReference>
<dbReference type="InterPro" id="IPR001093">
    <property type="entry name" value="IMP_DH_GMPRt"/>
</dbReference>
<dbReference type="NCBIfam" id="TIGR01306">
    <property type="entry name" value="GMP_reduct_2"/>
    <property type="match status" value="1"/>
</dbReference>
<dbReference type="NCBIfam" id="NF003966">
    <property type="entry name" value="PRK05458.1"/>
    <property type="match status" value="1"/>
</dbReference>
<dbReference type="PANTHER" id="PTHR43170">
    <property type="entry name" value="GMP REDUCTASE"/>
    <property type="match status" value="1"/>
</dbReference>
<dbReference type="PANTHER" id="PTHR43170:SF5">
    <property type="entry name" value="GMP REDUCTASE"/>
    <property type="match status" value="1"/>
</dbReference>
<dbReference type="Pfam" id="PF00478">
    <property type="entry name" value="IMPDH"/>
    <property type="match status" value="1"/>
</dbReference>
<dbReference type="PIRSF" id="PIRSF036500">
    <property type="entry name" value="GMP_red_Firmic"/>
    <property type="match status" value="1"/>
</dbReference>
<dbReference type="SMART" id="SM01240">
    <property type="entry name" value="IMPDH"/>
    <property type="match status" value="1"/>
</dbReference>
<dbReference type="SUPFAM" id="SSF51412">
    <property type="entry name" value="Inosine monophosphate dehydrogenase (IMPDH)"/>
    <property type="match status" value="1"/>
</dbReference>
<dbReference type="PROSITE" id="PS00487">
    <property type="entry name" value="IMP_DH_GMP_RED"/>
    <property type="match status" value="1"/>
</dbReference>
<evidence type="ECO:0000255" key="1">
    <source>
        <dbReference type="HAMAP-Rule" id="MF_01511"/>
    </source>
</evidence>
<organism>
    <name type="scientific">Staphylococcus epidermidis (strain ATCC 12228 / FDA PCI 1200)</name>
    <dbReference type="NCBI Taxonomy" id="176280"/>
    <lineage>
        <taxon>Bacteria</taxon>
        <taxon>Bacillati</taxon>
        <taxon>Bacillota</taxon>
        <taxon>Bacilli</taxon>
        <taxon>Bacillales</taxon>
        <taxon>Staphylococcaceae</taxon>
        <taxon>Staphylococcus</taxon>
    </lineage>
</organism>
<proteinExistence type="inferred from homology"/>
<gene>
    <name evidence="1" type="primary">guaC</name>
    <name type="ordered locus">SE_1019</name>
</gene>
<feature type="chain" id="PRO_0000093769" description="GMP reductase">
    <location>
        <begin position="1"/>
        <end position="325"/>
    </location>
</feature>
<feature type="active site" description="Thioimidate intermediate" evidence="1">
    <location>
        <position position="174"/>
    </location>
</feature>
<feature type="binding site" evidence="1">
    <location>
        <begin position="203"/>
        <end position="226"/>
    </location>
    <ligand>
        <name>NADP(+)</name>
        <dbReference type="ChEBI" id="CHEBI:58349"/>
    </ligand>
</feature>
<keyword id="KW-0521">NADP</keyword>
<keyword id="KW-0560">Oxidoreductase</keyword>